<evidence type="ECO:0000255" key="1">
    <source>
        <dbReference type="HAMAP-Rule" id="MF_01989"/>
    </source>
</evidence>
<evidence type="ECO:0000305" key="2"/>
<evidence type="ECO:0007829" key="3">
    <source>
        <dbReference type="PDB" id="5T13"/>
    </source>
</evidence>
<name>CAH_ENTCL</name>
<accession>P0A3V4</accession>
<accession>O87589</accession>
<geneLocation type="plasmid">
    <name>pPDL12</name>
</geneLocation>
<reference key="1">
    <citation type="journal article" date="1991" name="J. Bacteriol.">
        <title>Cloning and comparison of the DNA encoding ammelide aminohydrolase and cyanuric acid amidohydrolase from three s-triazine-degrading bacterial strains.</title>
        <authorList>
            <person name="Eaton R.W."/>
            <person name="Karns J.S."/>
        </authorList>
    </citation>
    <scope>NUCLEOTIDE SEQUENCE [GENOMIC DNA]</scope>
    <source>
        <strain>99</strain>
    </source>
</reference>
<comment type="function">
    <text evidence="1">Responsible for the hydrolysis of cyanuric acid, an intermediate formed during catabolism of s-triazine based compounds in herbicides such as atrazine and polymers such as melamine. Catalyzes the hydrolytic opening of the s-triazine ring of cyanuric acid (2,4,6-trihydroxy-s-triazine) to yield carbon dioxide and carboxybiuret, which spontaneously decarboxylates to biuret.</text>
</comment>
<comment type="catalytic activity">
    <reaction evidence="1">
        <text>cyanurate + H2O = 1-carboxybiuret + H(+)</text>
        <dbReference type="Rhea" id="RHEA:70363"/>
        <dbReference type="ChEBI" id="CHEBI:15377"/>
        <dbReference type="ChEBI" id="CHEBI:15378"/>
        <dbReference type="ChEBI" id="CHEBI:38028"/>
        <dbReference type="ChEBI" id="CHEBI:142864"/>
        <dbReference type="EC" id="3.5.2.15"/>
    </reaction>
</comment>
<comment type="activity regulation">
    <text evidence="1">Inhibited by barbituric acid.</text>
</comment>
<comment type="pathway">
    <text evidence="1">Xenobiotic degradation; atrazine degradation; biuret from cyanurate: step 1/1.</text>
</comment>
<comment type="subunit">
    <text evidence="1">Homotetramer.</text>
</comment>
<comment type="domain">
    <text evidence="1">The monomer structure is formed from three repeating units (RUs) that share the same structure as one another. The monomer, the active site and substrate all possess threefold rotational symmetry, to the extent that the active site possesses three potential Ser-Lys catalytic dyads. It is possible that any or all of the three active-site serines may act as nucleophile (albeit only one can do so per catalytic cycle).</text>
</comment>
<comment type="similarity">
    <text evidence="1 2">Belongs to the cyclic amide hydrolase (CyAH) family.</text>
</comment>
<dbReference type="EC" id="3.5.2.15" evidence="1"/>
<dbReference type="EMBL" id="AF342826">
    <property type="protein sequence ID" value="AAK11688.1"/>
    <property type="molecule type" value="Genomic_DNA"/>
</dbReference>
<dbReference type="PDB" id="5T13">
    <property type="method" value="X-ray"/>
    <property type="resolution" value="2.19 A"/>
    <property type="chains" value="A=1-370"/>
</dbReference>
<dbReference type="PDBsum" id="5T13"/>
<dbReference type="SMR" id="P0A3V4"/>
<dbReference type="BRENDA" id="3.5.2.15">
    <property type="organism ID" value="155"/>
</dbReference>
<dbReference type="UniPathway" id="UPA00008">
    <property type="reaction ID" value="UER00502"/>
</dbReference>
<dbReference type="GO" id="GO:0018753">
    <property type="term" value="F:cyanuric acid amidohydrolase activity"/>
    <property type="evidence" value="ECO:0007669"/>
    <property type="project" value="UniProtKB-UniRule"/>
</dbReference>
<dbReference type="GO" id="GO:0046872">
    <property type="term" value="F:metal ion binding"/>
    <property type="evidence" value="ECO:0007669"/>
    <property type="project" value="UniProtKB-UniRule"/>
</dbReference>
<dbReference type="GO" id="GO:0019381">
    <property type="term" value="P:atrazine catabolic process"/>
    <property type="evidence" value="ECO:0007669"/>
    <property type="project" value="UniProtKB-UniRule"/>
</dbReference>
<dbReference type="Gene3D" id="3.30.1330.160">
    <property type="entry name" value="Cyanuric acid hydrolase/Barbituras, RU C"/>
    <property type="match status" value="1"/>
</dbReference>
<dbReference type="Gene3D" id="3.30.1330.170">
    <property type="entry name" value="Cyanuric acid hydrolase/Barbiturase, RU A"/>
    <property type="match status" value="1"/>
</dbReference>
<dbReference type="Gene3D" id="3.30.1330.180">
    <property type="entry name" value="Cyanuric acid hydrolase/Barbiturase, RU B"/>
    <property type="match status" value="1"/>
</dbReference>
<dbReference type="HAMAP" id="MF_01989">
    <property type="entry name" value="Cyc_amidohydrol"/>
    <property type="match status" value="1"/>
</dbReference>
<dbReference type="InterPro" id="IPR014086">
    <property type="entry name" value="AtzD/Barbiturase"/>
</dbReference>
<dbReference type="InterPro" id="IPR043008">
    <property type="entry name" value="AtzD/Barbiturase_RUA"/>
</dbReference>
<dbReference type="InterPro" id="IPR043006">
    <property type="entry name" value="AtzD/Barbiturase_RUB"/>
</dbReference>
<dbReference type="InterPro" id="IPR043007">
    <property type="entry name" value="AtzD/Barbiturase_RUC"/>
</dbReference>
<dbReference type="NCBIfam" id="TIGR02714">
    <property type="entry name" value="amido_AtzD_TrzD"/>
    <property type="match status" value="1"/>
</dbReference>
<dbReference type="Pfam" id="PF09663">
    <property type="entry name" value="Amido_AtzD_TrzD"/>
    <property type="match status" value="1"/>
</dbReference>
<proteinExistence type="evidence at protein level"/>
<sequence>MQAQVFRVPMSNPADVSGVAKLIDEGVIRAEEVVCVLGKTEGNGCVNDFTRGYTTLAFKVYFSEKLGVSRQEVGERIAFIMSGGTEGVMAPHCTIFTVQKTDNKQKTAAEGKRLAVQQIFTREFLPEEIGRMPQVTETADAVRRAMREAGIADASDVHFVQVKCPLLTAGRMHDAVERGHTVATEDTYESMGYSRGASALGIALALGEVEKANLSDEVITADYSLYSSVASTSAGIELMNNEIIVMGNSRAWGGDLVIGHAEMKDAIDGAAVRQALRDVGCCENDLPTVDELGRVVNVFAKAEASPDGEVRNRRHTMLDDSDINSTRHARAVVNAVIASIVGDPMVYVSGGSEHQGPAGGGPVAVIARTA</sequence>
<keyword id="KW-0002">3D-structure</keyword>
<keyword id="KW-0378">Hydrolase</keyword>
<keyword id="KW-0460">Magnesium</keyword>
<keyword id="KW-0479">Metal-binding</keyword>
<keyword id="KW-0614">Plasmid</keyword>
<organism>
    <name type="scientific">Enterobacter cloacae</name>
    <dbReference type="NCBI Taxonomy" id="550"/>
    <lineage>
        <taxon>Bacteria</taxon>
        <taxon>Pseudomonadati</taxon>
        <taxon>Pseudomonadota</taxon>
        <taxon>Gammaproteobacteria</taxon>
        <taxon>Enterobacterales</taxon>
        <taxon>Enterobacteriaceae</taxon>
        <taxon>Enterobacter</taxon>
        <taxon>Enterobacter cloacae complex</taxon>
    </lineage>
</organism>
<gene>
    <name type="primary">trzD</name>
</gene>
<feature type="chain" id="PRO_0000065648" description="Cyanuric acid amidohydrolase">
    <location>
        <begin position="1"/>
        <end position="370"/>
    </location>
</feature>
<feature type="region of interest" description="RU A" evidence="1">
    <location>
        <begin position="1"/>
        <end position="103"/>
    </location>
</feature>
<feature type="region of interest" description="RU B" evidence="1">
    <location>
        <begin position="113"/>
        <end position="250"/>
    </location>
</feature>
<feature type="region of interest" description="RU C" evidence="1">
    <location>
        <begin position="256"/>
        <end position="370"/>
    </location>
</feature>
<feature type="active site" evidence="1">
    <location>
        <position position="163"/>
    </location>
</feature>
<feature type="active site" description="Nucleophile" evidence="1">
    <location>
        <position position="233"/>
    </location>
</feature>
<feature type="binding site" evidence="1">
    <location>
        <position position="51"/>
    </location>
    <ligand>
        <name>substrate</name>
    </ligand>
</feature>
<feature type="binding site" evidence="1">
    <location>
        <begin position="82"/>
        <end position="83"/>
    </location>
    <ligand>
        <name>substrate</name>
    </ligand>
</feature>
<feature type="binding site" evidence="1">
    <location>
        <position position="195"/>
    </location>
    <ligand>
        <name>substrate</name>
    </ligand>
</feature>
<feature type="binding site" evidence="1">
    <location>
        <begin position="233"/>
        <end position="234"/>
    </location>
    <ligand>
        <name>substrate</name>
    </ligand>
</feature>
<feature type="binding site" evidence="1">
    <location>
        <position position="303"/>
    </location>
    <ligand>
        <name>Mg(2+)</name>
        <dbReference type="ChEBI" id="CHEBI:18420"/>
        <note>structural</note>
    </ligand>
</feature>
<feature type="binding site" evidence="1">
    <location>
        <position position="330"/>
    </location>
    <ligand>
        <name>substrate</name>
    </ligand>
</feature>
<feature type="binding site" evidence="1">
    <location>
        <begin position="349"/>
        <end position="350"/>
    </location>
    <ligand>
        <name>substrate</name>
    </ligand>
</feature>
<feature type="binding site" evidence="1">
    <location>
        <position position="352"/>
    </location>
    <ligand>
        <name>Mg(2+)</name>
        <dbReference type="ChEBI" id="CHEBI:18420"/>
        <note>structural</note>
    </ligand>
</feature>
<feature type="binding site" evidence="1">
    <location>
        <position position="355"/>
    </location>
    <ligand>
        <name>Mg(2+)</name>
        <dbReference type="ChEBI" id="CHEBI:18420"/>
        <note>structural</note>
    </ligand>
</feature>
<feature type="binding site" evidence="1">
    <location>
        <position position="356"/>
    </location>
    <ligand>
        <name>Mg(2+)</name>
        <dbReference type="ChEBI" id="CHEBI:18420"/>
        <note>structural</note>
    </ligand>
</feature>
<feature type="binding site" evidence="1">
    <location>
        <position position="357"/>
    </location>
    <ligand>
        <name>Mg(2+)</name>
        <dbReference type="ChEBI" id="CHEBI:18420"/>
        <note>structural</note>
    </ligand>
</feature>
<feature type="binding site" evidence="1">
    <location>
        <position position="360"/>
    </location>
    <ligand>
        <name>Mg(2+)</name>
        <dbReference type="ChEBI" id="CHEBI:18420"/>
        <note>structural</note>
    </ligand>
</feature>
<feature type="site" description="Important for substrate specificity" evidence="1">
    <location>
        <position position="326"/>
    </location>
</feature>
<feature type="strand" evidence="3">
    <location>
        <begin position="1"/>
        <end position="9"/>
    </location>
</feature>
<feature type="helix" evidence="3">
    <location>
        <begin position="17"/>
        <end position="24"/>
    </location>
</feature>
<feature type="helix" evidence="3">
    <location>
        <begin position="30"/>
        <end position="32"/>
    </location>
</feature>
<feature type="strand" evidence="3">
    <location>
        <begin position="33"/>
        <end position="42"/>
    </location>
</feature>
<feature type="helix" evidence="3">
    <location>
        <begin position="50"/>
        <end position="66"/>
    </location>
</feature>
<feature type="helix" evidence="3">
    <location>
        <begin position="70"/>
        <end position="76"/>
    </location>
</feature>
<feature type="strand" evidence="3">
    <location>
        <begin position="77"/>
        <end position="83"/>
    </location>
</feature>
<feature type="strand" evidence="3">
    <location>
        <begin position="92"/>
        <end position="106"/>
    </location>
</feature>
<feature type="strand" evidence="3">
    <location>
        <begin position="113"/>
        <end position="120"/>
    </location>
</feature>
<feature type="helix" evidence="3">
    <location>
        <begin position="126"/>
        <end position="128"/>
    </location>
</feature>
<feature type="helix" evidence="3">
    <location>
        <begin position="132"/>
        <end position="148"/>
    </location>
</feature>
<feature type="helix" evidence="3">
    <location>
        <begin position="154"/>
        <end position="156"/>
    </location>
</feature>
<feature type="strand" evidence="3">
    <location>
        <begin position="157"/>
        <end position="164"/>
    </location>
</feature>
<feature type="helix" evidence="3">
    <location>
        <begin position="169"/>
        <end position="177"/>
    </location>
</feature>
<feature type="helix" evidence="3">
    <location>
        <begin position="187"/>
        <end position="205"/>
    </location>
</feature>
<feature type="helix" evidence="3">
    <location>
        <begin position="211"/>
        <end position="213"/>
    </location>
</feature>
<feature type="helix" evidence="3">
    <location>
        <begin position="216"/>
        <end position="218"/>
    </location>
</feature>
<feature type="turn" evidence="3">
    <location>
        <begin position="219"/>
        <end position="221"/>
    </location>
</feature>
<feature type="strand" evidence="3">
    <location>
        <begin position="227"/>
        <end position="234"/>
    </location>
</feature>
<feature type="strand" evidence="3">
    <location>
        <begin position="242"/>
        <end position="249"/>
    </location>
</feature>
<feature type="strand" evidence="3">
    <location>
        <begin position="252"/>
        <end position="265"/>
    </location>
</feature>
<feature type="helix" evidence="3">
    <location>
        <begin position="269"/>
        <end position="278"/>
    </location>
</feature>
<feature type="strand" evidence="3">
    <location>
        <begin position="283"/>
        <end position="286"/>
    </location>
</feature>
<feature type="helix" evidence="3">
    <location>
        <begin position="289"/>
        <end position="293"/>
    </location>
</feature>
<feature type="strand" evidence="3">
    <location>
        <begin position="295"/>
        <end position="302"/>
    </location>
</feature>
<feature type="strand" evidence="3">
    <location>
        <begin position="308"/>
        <end position="310"/>
    </location>
</feature>
<feature type="strand" evidence="3">
    <location>
        <begin position="321"/>
        <end position="323"/>
    </location>
</feature>
<feature type="helix" evidence="3">
    <location>
        <begin position="325"/>
        <end position="341"/>
    </location>
</feature>
<feature type="strand" evidence="3">
    <location>
        <begin position="347"/>
        <end position="350"/>
    </location>
</feature>
<feature type="strand" evidence="3">
    <location>
        <begin position="355"/>
        <end position="357"/>
    </location>
</feature>
<feature type="strand" evidence="3">
    <location>
        <begin position="361"/>
        <end position="368"/>
    </location>
</feature>
<protein>
    <recommendedName>
        <fullName evidence="1">Cyanuric acid amidohydrolase</fullName>
        <shortName evidence="1">CAH</shortName>
        <ecNumber evidence="1">3.5.2.15</ecNumber>
    </recommendedName>
</protein>